<accession>B9DPG3</accession>
<reference key="1">
    <citation type="journal article" date="2009" name="Appl. Environ. Microbiol.">
        <title>Genome analysis of the meat starter culture bacterium Staphylococcus carnosus TM300.</title>
        <authorList>
            <person name="Rosenstein R."/>
            <person name="Nerz C."/>
            <person name="Biswas L."/>
            <person name="Resch A."/>
            <person name="Raddatz G."/>
            <person name="Schuster S.C."/>
            <person name="Goetz F."/>
        </authorList>
    </citation>
    <scope>NUCLEOTIDE SEQUENCE [LARGE SCALE GENOMIC DNA]</scope>
    <source>
        <strain>TM300</strain>
    </source>
</reference>
<keyword id="KW-0963">Cytoplasm</keyword>
<keyword id="KW-0274">FAD</keyword>
<keyword id="KW-0285">Flavoprotein</keyword>
<keyword id="KW-0489">Methyltransferase</keyword>
<keyword id="KW-0520">NAD</keyword>
<keyword id="KW-0521">NADP</keyword>
<keyword id="KW-1185">Reference proteome</keyword>
<keyword id="KW-0808">Transferase</keyword>
<keyword id="KW-0819">tRNA processing</keyword>
<sequence length="436" mass="48501">MAETVVNVVGAGLAGSEAAYQLAQRGIKVNLIEMRPVRQTPAHHTDKFAELVCSNSLRGNSLTNAVGVLKEEMRRLDSLIIKAADAARVPAGGALAVDRHDFAGYITDTLKSHPNVNVINEEIESIPEGYTIIATGPLTTEGLAKEIVEITGEDQLYFYDAAAPIIEKESIDMDKVYLKSRYDKGEAAYLNCPMTEEEFDRFYDAVLEAEAAPVNEFEKEKYFEGCMPFEVMAERGRKTLLFGPMKPVGLEDPKTGKRPFAVVQLRQDDAAGTLYNIVGFQTHLKWGAQKEVIRLIPGLENVDIVRYGVMHRNTFINSPDVLSETYQLKGNDHLYFAGQMTGVEGYVESAASGLVAGINVAHKLQDKAEVVFPRETMIGSMAYYISHANNNKNFQPMNANFGLVPSLEKRIKDKKERYEQQANRALTYLENFKQTL</sequence>
<evidence type="ECO:0000255" key="1">
    <source>
        <dbReference type="HAMAP-Rule" id="MF_01037"/>
    </source>
</evidence>
<proteinExistence type="inferred from homology"/>
<comment type="function">
    <text evidence="1">Catalyzes the folate-dependent formation of 5-methyl-uridine at position 54 (M-5-U54) in all tRNAs.</text>
</comment>
<comment type="catalytic activity">
    <reaction evidence="1">
        <text>uridine(54) in tRNA + (6R)-5,10-methylene-5,6,7,8-tetrahydrofolate + NADH + H(+) = 5-methyluridine(54) in tRNA + (6S)-5,6,7,8-tetrahydrofolate + NAD(+)</text>
        <dbReference type="Rhea" id="RHEA:16873"/>
        <dbReference type="Rhea" id="RHEA-COMP:10167"/>
        <dbReference type="Rhea" id="RHEA-COMP:10193"/>
        <dbReference type="ChEBI" id="CHEBI:15378"/>
        <dbReference type="ChEBI" id="CHEBI:15636"/>
        <dbReference type="ChEBI" id="CHEBI:57453"/>
        <dbReference type="ChEBI" id="CHEBI:57540"/>
        <dbReference type="ChEBI" id="CHEBI:57945"/>
        <dbReference type="ChEBI" id="CHEBI:65315"/>
        <dbReference type="ChEBI" id="CHEBI:74447"/>
        <dbReference type="EC" id="2.1.1.74"/>
    </reaction>
</comment>
<comment type="catalytic activity">
    <reaction evidence="1">
        <text>uridine(54) in tRNA + (6R)-5,10-methylene-5,6,7,8-tetrahydrofolate + NADPH + H(+) = 5-methyluridine(54) in tRNA + (6S)-5,6,7,8-tetrahydrofolate + NADP(+)</text>
        <dbReference type="Rhea" id="RHEA:62372"/>
        <dbReference type="Rhea" id="RHEA-COMP:10167"/>
        <dbReference type="Rhea" id="RHEA-COMP:10193"/>
        <dbReference type="ChEBI" id="CHEBI:15378"/>
        <dbReference type="ChEBI" id="CHEBI:15636"/>
        <dbReference type="ChEBI" id="CHEBI:57453"/>
        <dbReference type="ChEBI" id="CHEBI:57783"/>
        <dbReference type="ChEBI" id="CHEBI:58349"/>
        <dbReference type="ChEBI" id="CHEBI:65315"/>
        <dbReference type="ChEBI" id="CHEBI:74447"/>
        <dbReference type="EC" id="2.1.1.74"/>
    </reaction>
</comment>
<comment type="cofactor">
    <cofactor evidence="1">
        <name>FAD</name>
        <dbReference type="ChEBI" id="CHEBI:57692"/>
    </cofactor>
</comment>
<comment type="subcellular location">
    <subcellularLocation>
        <location evidence="1">Cytoplasm</location>
    </subcellularLocation>
</comment>
<comment type="similarity">
    <text evidence="1">Belongs to the MnmG family. TrmFO subfamily.</text>
</comment>
<feature type="chain" id="PRO_1000149475" description="Methylenetetrahydrofolate--tRNA-(uracil-5-)-methyltransferase TrmFO">
    <location>
        <begin position="1"/>
        <end position="436"/>
    </location>
</feature>
<feature type="binding site" evidence="1">
    <location>
        <begin position="10"/>
        <end position="15"/>
    </location>
    <ligand>
        <name>FAD</name>
        <dbReference type="ChEBI" id="CHEBI:57692"/>
    </ligand>
</feature>
<protein>
    <recommendedName>
        <fullName evidence="1">Methylenetetrahydrofolate--tRNA-(uracil-5-)-methyltransferase TrmFO</fullName>
        <ecNumber evidence="1">2.1.1.74</ecNumber>
    </recommendedName>
    <alternativeName>
        <fullName evidence="1">Folate-dependent tRNA (uracil-5-)-methyltransferase</fullName>
    </alternativeName>
    <alternativeName>
        <fullName evidence="1">Folate-dependent tRNA(M-5-U54)-methyltransferase</fullName>
    </alternativeName>
</protein>
<gene>
    <name evidence="1" type="primary">trmFO</name>
    <name type="ordered locus">Sca_0885</name>
</gene>
<organism>
    <name type="scientific">Staphylococcus carnosus (strain TM300)</name>
    <dbReference type="NCBI Taxonomy" id="396513"/>
    <lineage>
        <taxon>Bacteria</taxon>
        <taxon>Bacillati</taxon>
        <taxon>Bacillota</taxon>
        <taxon>Bacilli</taxon>
        <taxon>Bacillales</taxon>
        <taxon>Staphylococcaceae</taxon>
        <taxon>Staphylococcus</taxon>
    </lineage>
</organism>
<dbReference type="EC" id="2.1.1.74" evidence="1"/>
<dbReference type="EMBL" id="AM295250">
    <property type="protein sequence ID" value="CAL27795.1"/>
    <property type="molecule type" value="Genomic_DNA"/>
</dbReference>
<dbReference type="RefSeq" id="WP_015900136.1">
    <property type="nucleotide sequence ID" value="NC_012121.1"/>
</dbReference>
<dbReference type="SMR" id="B9DPG3"/>
<dbReference type="GeneID" id="93793316"/>
<dbReference type="KEGG" id="sca:SCA_0885"/>
<dbReference type="eggNOG" id="COG1206">
    <property type="taxonomic scope" value="Bacteria"/>
</dbReference>
<dbReference type="HOGENOM" id="CLU_033057_1_0_9"/>
<dbReference type="OrthoDB" id="9803114at2"/>
<dbReference type="BioCyc" id="SCAR396513:SCA_RS04470-MONOMER"/>
<dbReference type="Proteomes" id="UP000000444">
    <property type="component" value="Chromosome"/>
</dbReference>
<dbReference type="GO" id="GO:0005829">
    <property type="term" value="C:cytosol"/>
    <property type="evidence" value="ECO:0007669"/>
    <property type="project" value="TreeGrafter"/>
</dbReference>
<dbReference type="GO" id="GO:0050660">
    <property type="term" value="F:flavin adenine dinucleotide binding"/>
    <property type="evidence" value="ECO:0007669"/>
    <property type="project" value="UniProtKB-UniRule"/>
</dbReference>
<dbReference type="GO" id="GO:0047151">
    <property type="term" value="F:tRNA (uracil(54)-C5)-methyltransferase activity, 5,10-methylenetetrahydrofolate-dependent"/>
    <property type="evidence" value="ECO:0007669"/>
    <property type="project" value="UniProtKB-UniRule"/>
</dbReference>
<dbReference type="GO" id="GO:0030488">
    <property type="term" value="P:tRNA methylation"/>
    <property type="evidence" value="ECO:0007669"/>
    <property type="project" value="TreeGrafter"/>
</dbReference>
<dbReference type="GO" id="GO:0002098">
    <property type="term" value="P:tRNA wobble uridine modification"/>
    <property type="evidence" value="ECO:0007669"/>
    <property type="project" value="TreeGrafter"/>
</dbReference>
<dbReference type="FunFam" id="3.50.50.60:FF:000035">
    <property type="entry name" value="Methylenetetrahydrofolate--tRNA-(uracil-5-)-methyltransferase TrmFO"/>
    <property type="match status" value="1"/>
</dbReference>
<dbReference type="FunFam" id="3.50.50.60:FF:000040">
    <property type="entry name" value="Methylenetetrahydrofolate--tRNA-(uracil-5-)-methyltransferase TrmFO"/>
    <property type="match status" value="1"/>
</dbReference>
<dbReference type="Gene3D" id="3.50.50.60">
    <property type="entry name" value="FAD/NAD(P)-binding domain"/>
    <property type="match status" value="2"/>
</dbReference>
<dbReference type="HAMAP" id="MF_01037">
    <property type="entry name" value="TrmFO"/>
    <property type="match status" value="1"/>
</dbReference>
<dbReference type="InterPro" id="IPR036188">
    <property type="entry name" value="FAD/NAD-bd_sf"/>
</dbReference>
<dbReference type="InterPro" id="IPR002218">
    <property type="entry name" value="MnmG-rel"/>
</dbReference>
<dbReference type="InterPro" id="IPR020595">
    <property type="entry name" value="MnmG-rel_CS"/>
</dbReference>
<dbReference type="InterPro" id="IPR040131">
    <property type="entry name" value="MnmG_N"/>
</dbReference>
<dbReference type="InterPro" id="IPR004417">
    <property type="entry name" value="TrmFO"/>
</dbReference>
<dbReference type="NCBIfam" id="TIGR00137">
    <property type="entry name" value="gid_trmFO"/>
    <property type="match status" value="1"/>
</dbReference>
<dbReference type="NCBIfam" id="NF003739">
    <property type="entry name" value="PRK05335.1"/>
    <property type="match status" value="1"/>
</dbReference>
<dbReference type="PANTHER" id="PTHR11806">
    <property type="entry name" value="GLUCOSE INHIBITED DIVISION PROTEIN A"/>
    <property type="match status" value="1"/>
</dbReference>
<dbReference type="PANTHER" id="PTHR11806:SF2">
    <property type="entry name" value="METHYLENETETRAHYDROFOLATE--TRNA-(URACIL-5-)-METHYLTRANSFERASE TRMFO"/>
    <property type="match status" value="1"/>
</dbReference>
<dbReference type="Pfam" id="PF01134">
    <property type="entry name" value="GIDA"/>
    <property type="match status" value="1"/>
</dbReference>
<dbReference type="SUPFAM" id="SSF51905">
    <property type="entry name" value="FAD/NAD(P)-binding domain"/>
    <property type="match status" value="1"/>
</dbReference>
<dbReference type="PROSITE" id="PS01281">
    <property type="entry name" value="GIDA_2"/>
    <property type="match status" value="1"/>
</dbReference>
<name>TRMFO_STACT</name>